<comment type="function">
    <text evidence="1">Participates in cysteine desulfuration mediated by SufS. Cysteine desulfuration mobilizes sulfur from L-cysteine to yield L-alanine and constitutes an essential step in sulfur metabolism for biosynthesis of a variety of sulfur-containing biomolecules. Functions as a sulfur acceptor for SufS, by mediating the direct transfer of the sulfur atom from the S-sulfanylcysteine of SufS, an intermediate product of cysteine desulfuration process.</text>
</comment>
<comment type="pathway">
    <text evidence="1">Cofactor biosynthesis; iron-sulfur cluster biosynthesis.</text>
</comment>
<comment type="subunit">
    <text evidence="1">Homodimer. Interacts with SufS.</text>
</comment>
<comment type="subcellular location">
    <subcellularLocation>
        <location evidence="1">Cytoplasm</location>
    </subcellularLocation>
</comment>
<comment type="similarity">
    <text evidence="1">Belongs to the SufE family.</text>
</comment>
<sequence length="140" mass="15568">MAGLPDRDKLIRNFSRCLNWEEKYLYIIELGGQLAPLTEQQRHPENLISGCQSQVWIAMTLSAEGHVIFAGDSDAAIVKGLVAVVFILYHDLTPQQIVSLDVRPFFADLALSQHLTPSRSQGLEAMIRAIRTKVADLSAH</sequence>
<dbReference type="EMBL" id="CP000720">
    <property type="protein sequence ID" value="ABS49754.1"/>
    <property type="molecule type" value="Genomic_DNA"/>
</dbReference>
<dbReference type="RefSeq" id="WP_012105029.1">
    <property type="nucleotide sequence ID" value="NC_009708.1"/>
</dbReference>
<dbReference type="SMR" id="A7FHJ3"/>
<dbReference type="KEGG" id="ypi:YpsIP31758_1746"/>
<dbReference type="HOGENOM" id="CLU_124502_1_1_6"/>
<dbReference type="UniPathway" id="UPA00266"/>
<dbReference type="Proteomes" id="UP000002412">
    <property type="component" value="Chromosome"/>
</dbReference>
<dbReference type="GO" id="GO:0005737">
    <property type="term" value="C:cytoplasm"/>
    <property type="evidence" value="ECO:0007669"/>
    <property type="project" value="UniProtKB-SubCell"/>
</dbReference>
<dbReference type="GO" id="GO:0016226">
    <property type="term" value="P:iron-sulfur cluster assembly"/>
    <property type="evidence" value="ECO:0007669"/>
    <property type="project" value="InterPro"/>
</dbReference>
<dbReference type="GO" id="GO:0006790">
    <property type="term" value="P:sulfur compound metabolic process"/>
    <property type="evidence" value="ECO:0007669"/>
    <property type="project" value="InterPro"/>
</dbReference>
<dbReference type="Gene3D" id="3.90.1010.10">
    <property type="match status" value="1"/>
</dbReference>
<dbReference type="HAMAP" id="MF_01832">
    <property type="entry name" value="SufE"/>
    <property type="match status" value="1"/>
</dbReference>
<dbReference type="InterPro" id="IPR023939">
    <property type="entry name" value="Cysteine_desulfuration_SufE"/>
</dbReference>
<dbReference type="InterPro" id="IPR003808">
    <property type="entry name" value="Fe-S_metab-assoc_dom"/>
</dbReference>
<dbReference type="NCBIfam" id="NF006792">
    <property type="entry name" value="PRK09296.1"/>
    <property type="match status" value="1"/>
</dbReference>
<dbReference type="PANTHER" id="PTHR43597:SF3">
    <property type="entry name" value="CYSTEINE DESULFURATION PROTEIN SUFE"/>
    <property type="match status" value="1"/>
</dbReference>
<dbReference type="PANTHER" id="PTHR43597">
    <property type="entry name" value="SULFUR ACCEPTOR PROTEIN CSDE"/>
    <property type="match status" value="1"/>
</dbReference>
<dbReference type="Pfam" id="PF02657">
    <property type="entry name" value="SufE"/>
    <property type="match status" value="1"/>
</dbReference>
<dbReference type="SUPFAM" id="SSF82649">
    <property type="entry name" value="SufE/NifU"/>
    <property type="match status" value="1"/>
</dbReference>
<feature type="chain" id="PRO_1000070452" description="Cysteine desulfuration protein SufE">
    <location>
        <begin position="1"/>
        <end position="140"/>
    </location>
</feature>
<feature type="active site" description="Cysteine persulfide intermediate" evidence="1">
    <location>
        <position position="51"/>
    </location>
</feature>
<name>SUFE_YERP3</name>
<evidence type="ECO:0000255" key="1">
    <source>
        <dbReference type="HAMAP-Rule" id="MF_01832"/>
    </source>
</evidence>
<organism>
    <name type="scientific">Yersinia pseudotuberculosis serotype O:1b (strain IP 31758)</name>
    <dbReference type="NCBI Taxonomy" id="349747"/>
    <lineage>
        <taxon>Bacteria</taxon>
        <taxon>Pseudomonadati</taxon>
        <taxon>Pseudomonadota</taxon>
        <taxon>Gammaproteobacteria</taxon>
        <taxon>Enterobacterales</taxon>
        <taxon>Yersiniaceae</taxon>
        <taxon>Yersinia</taxon>
    </lineage>
</organism>
<keyword id="KW-0963">Cytoplasm</keyword>
<protein>
    <recommendedName>
        <fullName evidence="1">Cysteine desulfuration protein SufE</fullName>
    </recommendedName>
</protein>
<gene>
    <name evidence="1" type="primary">sufE</name>
    <name type="ordered locus">YpsIP31758_1746</name>
</gene>
<accession>A7FHJ3</accession>
<proteinExistence type="inferred from homology"/>
<reference key="1">
    <citation type="journal article" date="2007" name="PLoS Genet.">
        <title>The complete genome sequence of Yersinia pseudotuberculosis IP31758, the causative agent of Far East scarlet-like fever.</title>
        <authorList>
            <person name="Eppinger M."/>
            <person name="Rosovitz M.J."/>
            <person name="Fricke W.F."/>
            <person name="Rasko D.A."/>
            <person name="Kokorina G."/>
            <person name="Fayolle C."/>
            <person name="Lindler L.E."/>
            <person name="Carniel E."/>
            <person name="Ravel J."/>
        </authorList>
    </citation>
    <scope>NUCLEOTIDE SEQUENCE [LARGE SCALE GENOMIC DNA]</scope>
    <source>
        <strain>IP 31758</strain>
    </source>
</reference>